<gene>
    <name evidence="8" type="primary">Ccnd2</name>
    <name evidence="6" type="synonym">Cyl-2</name>
</gene>
<keyword id="KW-0131">Cell cycle</keyword>
<keyword id="KW-0132">Cell division</keyword>
<keyword id="KW-0195">Cyclin</keyword>
<keyword id="KW-0963">Cytoplasm</keyword>
<keyword id="KW-0472">Membrane</keyword>
<keyword id="KW-0539">Nucleus</keyword>
<keyword id="KW-0597">Phosphoprotein</keyword>
<keyword id="KW-1185">Reference proteome</keyword>
<keyword id="KW-0832">Ubl conjugation</keyword>
<sequence length="289" mass="32897">MELLCCEVDPVRRAVPDRNLLEDRVLQNLLTIEERYLPQCSYFKCVQKDIQPYMRRMVATWMLEVCEEQKCEEEVFPLAMNYLDRFLAGVPTPKTHLQLLGAVCMFLASKLKETIPLTAEKLCIYTDNSVKPQELLEWELVVLGKLKWNLAAVTPHDFIEHILRKLPQQKEKLSLIRKHAQTFIALCATDFKFAMYPPSMIATGSVGAAICGLQQDDEVNTLTCDALTELLAKITHTDVDCLKACQEQIEALLLNSLQQFRQEQHNAGSKSVEDPDQATTPTDVRDVDL</sequence>
<dbReference type="EMBL" id="M83749">
    <property type="protein sequence ID" value="AAA37519.1"/>
    <property type="molecule type" value="mRNA"/>
</dbReference>
<dbReference type="EMBL" id="M86182">
    <property type="protein sequence ID" value="AAA37503.1"/>
    <property type="molecule type" value="mRNA"/>
</dbReference>
<dbReference type="EMBL" id="BC049086">
    <property type="protein sequence ID" value="AAH49086.1"/>
    <property type="molecule type" value="mRNA"/>
</dbReference>
<dbReference type="CCDS" id="CCDS20564.1"/>
<dbReference type="PIR" id="A41984">
    <property type="entry name" value="A41984"/>
</dbReference>
<dbReference type="RefSeq" id="NP_033959.1">
    <property type="nucleotide sequence ID" value="NM_009829.3"/>
</dbReference>
<dbReference type="RefSeq" id="XP_006505522.1">
    <property type="nucleotide sequence ID" value="XM_006505459.3"/>
</dbReference>
<dbReference type="RefSeq" id="XP_006505523.1">
    <property type="nucleotide sequence ID" value="XM_006505460.1"/>
</dbReference>
<dbReference type="SMR" id="P30280"/>
<dbReference type="BioGRID" id="198549">
    <property type="interactions" value="5"/>
</dbReference>
<dbReference type="ComplexPortal" id="CPX-2074">
    <property type="entry name" value="Cyclin D2-CDK4 complex"/>
</dbReference>
<dbReference type="CORUM" id="P30280"/>
<dbReference type="DIP" id="DIP-24177N"/>
<dbReference type="FunCoup" id="P30280">
    <property type="interactions" value="1909"/>
</dbReference>
<dbReference type="IntAct" id="P30280">
    <property type="interactions" value="4"/>
</dbReference>
<dbReference type="STRING" id="10090.ENSMUSP00000000188"/>
<dbReference type="iPTMnet" id="P30280"/>
<dbReference type="PhosphoSitePlus" id="P30280"/>
<dbReference type="PaxDb" id="10090-ENSMUSP00000000188"/>
<dbReference type="PeptideAtlas" id="P30280"/>
<dbReference type="ProteomicsDB" id="265616"/>
<dbReference type="Pumba" id="P30280"/>
<dbReference type="DNASU" id="12444"/>
<dbReference type="Ensembl" id="ENSMUST00000000188.12">
    <property type="protein sequence ID" value="ENSMUSP00000000188.9"/>
    <property type="gene ID" value="ENSMUSG00000000184.13"/>
</dbReference>
<dbReference type="GeneID" id="12444"/>
<dbReference type="KEGG" id="mmu:12444"/>
<dbReference type="UCSC" id="uc009dvr.1">
    <property type="organism name" value="mouse"/>
</dbReference>
<dbReference type="AGR" id="MGI:88314"/>
<dbReference type="CTD" id="894"/>
<dbReference type="MGI" id="MGI:88314">
    <property type="gene designation" value="Ccnd2"/>
</dbReference>
<dbReference type="VEuPathDB" id="HostDB:ENSMUSG00000000184"/>
<dbReference type="eggNOG" id="KOG0656">
    <property type="taxonomic scope" value="Eukaryota"/>
</dbReference>
<dbReference type="GeneTree" id="ENSGT00940000155180"/>
<dbReference type="InParanoid" id="P30280"/>
<dbReference type="OMA" id="CLEMDTN"/>
<dbReference type="OrthoDB" id="306099at2759"/>
<dbReference type="PhylomeDB" id="P30280"/>
<dbReference type="TreeFam" id="TF101004"/>
<dbReference type="Reactome" id="R-MMU-69231">
    <property type="pathway name" value="Cyclin D associated events in G1"/>
</dbReference>
<dbReference type="Reactome" id="R-MMU-8934593">
    <property type="pathway name" value="Regulation of RUNX1 Expression and Activity"/>
</dbReference>
<dbReference type="Reactome" id="R-MMU-9754119">
    <property type="pathway name" value="Drug-mediated inhibition of CDK4/CDK6 activity"/>
</dbReference>
<dbReference type="BioGRID-ORCS" id="12444">
    <property type="hits" value="2 hits in 78 CRISPR screens"/>
</dbReference>
<dbReference type="ChiTaRS" id="Ccnd2">
    <property type="organism name" value="mouse"/>
</dbReference>
<dbReference type="PRO" id="PR:P30280"/>
<dbReference type="Proteomes" id="UP000000589">
    <property type="component" value="Chromosome 6"/>
</dbReference>
<dbReference type="RNAct" id="P30280">
    <property type="molecule type" value="protein"/>
</dbReference>
<dbReference type="Bgee" id="ENSMUSG00000000184">
    <property type="expression patterns" value="Expressed in rostral migratory stream and 312 other cell types or tissues"/>
</dbReference>
<dbReference type="ExpressionAtlas" id="P30280">
    <property type="expression patterns" value="baseline and differential"/>
</dbReference>
<dbReference type="GO" id="GO:0000785">
    <property type="term" value="C:chromatin"/>
    <property type="evidence" value="ECO:0007669"/>
    <property type="project" value="Ensembl"/>
</dbReference>
<dbReference type="GO" id="GO:0097129">
    <property type="term" value="C:cyclin D2-CDK4 complex"/>
    <property type="evidence" value="ECO:0000314"/>
    <property type="project" value="MGI"/>
</dbReference>
<dbReference type="GO" id="GO:0005829">
    <property type="term" value="C:cytosol"/>
    <property type="evidence" value="ECO:0007669"/>
    <property type="project" value="Ensembl"/>
</dbReference>
<dbReference type="GO" id="GO:0031965">
    <property type="term" value="C:nuclear membrane"/>
    <property type="evidence" value="ECO:0007669"/>
    <property type="project" value="UniProtKB-SubCell"/>
</dbReference>
<dbReference type="GO" id="GO:0005730">
    <property type="term" value="C:nucleolus"/>
    <property type="evidence" value="ECO:0007669"/>
    <property type="project" value="Ensembl"/>
</dbReference>
<dbReference type="GO" id="GO:0005654">
    <property type="term" value="C:nucleoplasm"/>
    <property type="evidence" value="ECO:0007669"/>
    <property type="project" value="Ensembl"/>
</dbReference>
<dbReference type="GO" id="GO:0005634">
    <property type="term" value="C:nucleus"/>
    <property type="evidence" value="ECO:0000314"/>
    <property type="project" value="MGI"/>
</dbReference>
<dbReference type="GO" id="GO:0061575">
    <property type="term" value="F:cyclin-dependent protein serine/threonine kinase activator activity"/>
    <property type="evidence" value="ECO:0007669"/>
    <property type="project" value="Ensembl"/>
</dbReference>
<dbReference type="GO" id="GO:0019901">
    <property type="term" value="F:protein kinase binding"/>
    <property type="evidence" value="ECO:0007669"/>
    <property type="project" value="Ensembl"/>
</dbReference>
<dbReference type="GO" id="GO:0008344">
    <property type="term" value="P:adult locomotory behavior"/>
    <property type="evidence" value="ECO:0000315"/>
    <property type="project" value="MGI"/>
</dbReference>
<dbReference type="GO" id="GO:0051301">
    <property type="term" value="P:cell division"/>
    <property type="evidence" value="ECO:0007669"/>
    <property type="project" value="UniProtKB-KW"/>
</dbReference>
<dbReference type="GO" id="GO:0071481">
    <property type="term" value="P:cellular response to X-ray"/>
    <property type="evidence" value="ECO:0000315"/>
    <property type="project" value="MGI"/>
</dbReference>
<dbReference type="GO" id="GO:0000082">
    <property type="term" value="P:G1/S transition of mitotic cell cycle"/>
    <property type="evidence" value="ECO:0000303"/>
    <property type="project" value="ComplexPortal"/>
</dbReference>
<dbReference type="GO" id="GO:0007616">
    <property type="term" value="P:long-term memory"/>
    <property type="evidence" value="ECO:0000315"/>
    <property type="project" value="MGI"/>
</dbReference>
<dbReference type="GO" id="GO:0043066">
    <property type="term" value="P:negative regulation of apoptotic process"/>
    <property type="evidence" value="ECO:0007669"/>
    <property type="project" value="Ensembl"/>
</dbReference>
<dbReference type="GO" id="GO:0008284">
    <property type="term" value="P:positive regulation of cell population proliferation"/>
    <property type="evidence" value="ECO:0007669"/>
    <property type="project" value="Ensembl"/>
</dbReference>
<dbReference type="GO" id="GO:1900087">
    <property type="term" value="P:positive regulation of G1/S transition of mitotic cell cycle"/>
    <property type="evidence" value="ECO:0007669"/>
    <property type="project" value="Ensembl"/>
</dbReference>
<dbReference type="GO" id="GO:0051726">
    <property type="term" value="P:regulation of cell cycle"/>
    <property type="evidence" value="ECO:0000315"/>
    <property type="project" value="MGI"/>
</dbReference>
<dbReference type="CDD" id="cd20577">
    <property type="entry name" value="CYCLIN_CCND2_rpt2"/>
    <property type="match status" value="1"/>
</dbReference>
<dbReference type="FunFam" id="1.10.472.10:FF:000012">
    <property type="entry name" value="G1/S-specific cyclin-D1"/>
    <property type="match status" value="1"/>
</dbReference>
<dbReference type="FunFam" id="1.10.472.10:FF:000120">
    <property type="entry name" value="G1/S-specific cyclin-D1"/>
    <property type="match status" value="1"/>
</dbReference>
<dbReference type="Gene3D" id="1.10.472.10">
    <property type="entry name" value="Cyclin-like"/>
    <property type="match status" value="2"/>
</dbReference>
<dbReference type="InterPro" id="IPR039361">
    <property type="entry name" value="Cyclin"/>
</dbReference>
<dbReference type="InterPro" id="IPR013763">
    <property type="entry name" value="Cyclin-like_dom"/>
</dbReference>
<dbReference type="InterPro" id="IPR036915">
    <property type="entry name" value="Cyclin-like_sf"/>
</dbReference>
<dbReference type="InterPro" id="IPR004367">
    <property type="entry name" value="Cyclin_C-dom"/>
</dbReference>
<dbReference type="InterPro" id="IPR006671">
    <property type="entry name" value="Cyclin_N"/>
</dbReference>
<dbReference type="InterPro" id="IPR048258">
    <property type="entry name" value="Cyclins_cyclin-box"/>
</dbReference>
<dbReference type="PANTHER" id="PTHR10177">
    <property type="entry name" value="CYCLINS"/>
    <property type="match status" value="1"/>
</dbReference>
<dbReference type="Pfam" id="PF02984">
    <property type="entry name" value="Cyclin_C"/>
    <property type="match status" value="1"/>
</dbReference>
<dbReference type="Pfam" id="PF00134">
    <property type="entry name" value="Cyclin_N"/>
    <property type="match status" value="1"/>
</dbReference>
<dbReference type="SMART" id="SM00385">
    <property type="entry name" value="CYCLIN"/>
    <property type="match status" value="1"/>
</dbReference>
<dbReference type="SMART" id="SM01332">
    <property type="entry name" value="Cyclin_C"/>
    <property type="match status" value="1"/>
</dbReference>
<dbReference type="SUPFAM" id="SSF47954">
    <property type="entry name" value="Cyclin-like"/>
    <property type="match status" value="2"/>
</dbReference>
<dbReference type="PROSITE" id="PS00292">
    <property type="entry name" value="CYCLINS"/>
    <property type="match status" value="1"/>
</dbReference>
<comment type="function">
    <text evidence="2">Regulatory component of the cyclin D2-CDK4 (DC) complex that phosphorylates and inhibits members of the retinoblastoma (RB) protein family including RB1 and regulates the cell-cycle during G(1)/S transition. Phosphorylation of RB1 allows dissociation of the transcription factor E2F from the RB/E2F complex and the subsequent transcription of E2F target genes which are responsible for the progression through the G(1) phase. Hypophosphorylates RB1 in early G(1) phase. Cyclin D-CDK4 complexes are major integrators of various mitogenenic and antimitogenic signals.</text>
</comment>
<comment type="subunit">
    <text evidence="2">Interacts with either CDK4 or CDK6 protein kinase to form a serine/threonine kinase holoenzyme complex. The cyclin subunit imparts substrate specificity to the complex.</text>
</comment>
<comment type="subcellular location">
    <subcellularLocation>
        <location evidence="2">Nucleus</location>
    </subcellularLocation>
    <subcellularLocation>
        <location evidence="2">Cytoplasm</location>
    </subcellularLocation>
    <subcellularLocation>
        <location evidence="2">Nucleus membrane</location>
    </subcellularLocation>
    <text evidence="2">Cyclin D-CDK4 complexes accumulate at the nuclear membrane and are then translocated into the nucleus through interaction with KIP/CIP family members.</text>
</comment>
<comment type="PTM">
    <text evidence="1">Phosphorylation at Thr-280 by MAP kinases is required for ubiquitination and degradation by the DCX(AMBRA1) complex.</text>
</comment>
<comment type="PTM">
    <text evidence="2 4 5">Ubiquitinated by the DCX(AMBRA1) complex during the transition from G1 to S cell phase, leading to its degradation: ubiquitination is dependent on Thr-280 phosphorylation (PubMed:33854232, PubMed:33854235). The DCX(AMBRA1) complex represents the major regulator of CCND2 stability during the G1/S transition (PubMed:33854232, PubMed:33854235). Polyubiquitinated by the SCF(FBXL2) complex, leading to proteasomal degradation (By similarity).</text>
</comment>
<comment type="similarity">
    <text evidence="7">Belongs to the cyclin family. Cyclin D subfamily.</text>
</comment>
<proteinExistence type="evidence at protein level"/>
<name>CCND2_MOUSE</name>
<feature type="chain" id="PRO_0000080438" description="G1/S-specific cyclin-D2">
    <location>
        <begin position="1"/>
        <end position="289"/>
    </location>
</feature>
<feature type="domain" description="Cyclin N-terminal">
    <location>
        <begin position="26"/>
        <end position="151"/>
    </location>
</feature>
<feature type="region of interest" description="Disordered" evidence="3">
    <location>
        <begin position="264"/>
        <end position="289"/>
    </location>
</feature>
<feature type="modified residue" description="Phosphoserine" evidence="2">
    <location>
        <position position="271"/>
    </location>
</feature>
<feature type="modified residue" description="Phosphothreonine" evidence="9">
    <location>
        <position position="280"/>
    </location>
</feature>
<protein>
    <recommendedName>
        <fullName>G1/S-specific cyclin-D2</fullName>
    </recommendedName>
</protein>
<accession>P30280</accession>
<organism>
    <name type="scientific">Mus musculus</name>
    <name type="common">Mouse</name>
    <dbReference type="NCBI Taxonomy" id="10090"/>
    <lineage>
        <taxon>Eukaryota</taxon>
        <taxon>Metazoa</taxon>
        <taxon>Chordata</taxon>
        <taxon>Craniata</taxon>
        <taxon>Vertebrata</taxon>
        <taxon>Euteleostomi</taxon>
        <taxon>Mammalia</taxon>
        <taxon>Eutheria</taxon>
        <taxon>Euarchontoglires</taxon>
        <taxon>Glires</taxon>
        <taxon>Rodentia</taxon>
        <taxon>Myomorpha</taxon>
        <taxon>Muroidea</taxon>
        <taxon>Muridae</taxon>
        <taxon>Murinae</taxon>
        <taxon>Mus</taxon>
        <taxon>Mus</taxon>
    </lineage>
</organism>
<evidence type="ECO:0000250" key="1">
    <source>
        <dbReference type="UniProtKB" id="P24385"/>
    </source>
</evidence>
<evidence type="ECO:0000250" key="2">
    <source>
        <dbReference type="UniProtKB" id="P30279"/>
    </source>
</evidence>
<evidence type="ECO:0000256" key="3">
    <source>
        <dbReference type="SAM" id="MobiDB-lite"/>
    </source>
</evidence>
<evidence type="ECO:0000269" key="4">
    <source>
    </source>
</evidence>
<evidence type="ECO:0000269" key="5">
    <source>
    </source>
</evidence>
<evidence type="ECO:0000303" key="6">
    <source>
    </source>
</evidence>
<evidence type="ECO:0000305" key="7"/>
<evidence type="ECO:0000312" key="8">
    <source>
        <dbReference type="MGI" id="MGI:88314"/>
    </source>
</evidence>
<evidence type="ECO:0007744" key="9">
    <source>
    </source>
</evidence>
<reference key="1">
    <citation type="journal article" date="1992" name="Proc. Natl. Acad. Sci. U.S.A.">
        <title>Cloning of a D-type cyclin from murine erythroleukemia cells.</title>
        <authorList>
            <person name="Kiyokawa H."/>
            <person name="Bousquets X."/>
            <person name="Powell C.T."/>
            <person name="Ngo L."/>
            <person name="Rifkind R.A."/>
            <person name="Marks P.A."/>
        </authorList>
    </citation>
    <scope>NUCLEOTIDE SEQUENCE [MRNA]</scope>
</reference>
<reference key="2">
    <citation type="journal article" date="1991" name="Cell">
        <title>Colony-stimulating factor 1 regulates novel cyclins during the G1 phase of the cell cycle.</title>
        <authorList>
            <person name="Matsushime H."/>
            <person name="Roussel M.F."/>
            <person name="Ashmun R.A."/>
            <person name="Sherr C.J."/>
        </authorList>
    </citation>
    <scope>NUCLEOTIDE SEQUENCE [MRNA]</scope>
</reference>
<reference key="3">
    <citation type="journal article" date="2004" name="Genome Res.">
        <title>The status, quality, and expansion of the NIH full-length cDNA project: the Mammalian Gene Collection (MGC).</title>
        <authorList>
            <consortium name="The MGC Project Team"/>
        </authorList>
    </citation>
    <scope>NUCLEOTIDE SEQUENCE [LARGE SCALE MRNA]</scope>
    <source>
        <strain>C57BL/6J</strain>
        <tissue>Brain</tissue>
    </source>
</reference>
<reference key="4">
    <citation type="journal article" date="2010" name="Cell">
        <title>A tissue-specific atlas of mouse protein phosphorylation and expression.</title>
        <authorList>
            <person name="Huttlin E.L."/>
            <person name="Jedrychowski M.P."/>
            <person name="Elias J.E."/>
            <person name="Goswami T."/>
            <person name="Rad R."/>
            <person name="Beausoleil S.A."/>
            <person name="Villen J."/>
            <person name="Haas W."/>
            <person name="Sowa M.E."/>
            <person name="Gygi S.P."/>
        </authorList>
    </citation>
    <scope>PHOSPHORYLATION [LARGE SCALE ANALYSIS] AT THR-280</scope>
    <scope>IDENTIFICATION BY MASS SPECTROMETRY [LARGE SCALE ANALYSIS]</scope>
    <source>
        <tissue>Heart</tissue>
        <tissue>Lung</tissue>
        <tissue>Pancreas</tissue>
    </source>
</reference>
<reference key="5">
    <citation type="journal article" date="2021" name="Nature">
        <title>AMBRA1 regulates cyclin D to guard S-phase entry and genomic integrity.</title>
        <authorList>
            <person name="Maiani E."/>
            <person name="Milletti G."/>
            <person name="Nazio F."/>
            <person name="Holdgaard S.G."/>
            <person name="Bartkova J."/>
            <person name="Rizza S."/>
            <person name="Cianfanelli V."/>
            <person name="Lorente M."/>
            <person name="Simoneschi D."/>
            <person name="Di Marco M."/>
            <person name="D'Acunzo P."/>
            <person name="Di Leo L."/>
            <person name="Rasmussen R."/>
            <person name="Montagna C."/>
            <person name="Raciti M."/>
            <person name="De Stefanis C."/>
            <person name="Gabicagogeascoa E."/>
            <person name="Rona G."/>
            <person name="Salvador N."/>
            <person name="Pupo E."/>
            <person name="Merchut-Maya J.M."/>
            <person name="Daniel C.J."/>
            <person name="Carinci M."/>
            <person name="Cesarini V."/>
            <person name="O'sullivan A."/>
            <person name="Jeong Y.T."/>
            <person name="Bordi M."/>
            <person name="Russo F."/>
            <person name="Campello S."/>
            <person name="Gallo A."/>
            <person name="Filomeni G."/>
            <person name="Lanzetti L."/>
            <person name="Sears R.C."/>
            <person name="Hamerlik P."/>
            <person name="Bartolazzi A."/>
            <person name="Hynds R.E."/>
            <person name="Pearce D.R."/>
            <person name="Swanton C."/>
            <person name="Pagano M."/>
            <person name="Velasco G."/>
            <person name="Papaleo E."/>
            <person name="De Zio D."/>
            <person name="Maya-Mendoza A."/>
            <person name="Locatelli F."/>
            <person name="Bartek J."/>
            <person name="Cecconi F."/>
        </authorList>
    </citation>
    <scope>UBIQUITINATION</scope>
</reference>
<reference key="6">
    <citation type="journal article" date="2021" name="Nature">
        <title>CRL4AMBRA1 is a master regulator of D-type cyclins.</title>
        <authorList>
            <person name="Simoneschi D."/>
            <person name="Rona G."/>
            <person name="Zhou N."/>
            <person name="Jeong Y.T."/>
            <person name="Jiang S."/>
            <person name="Milletti G."/>
            <person name="Arbini A.A."/>
            <person name="O'Sullivan A."/>
            <person name="Wang A.A."/>
            <person name="Nithikasem S."/>
            <person name="Keegan S."/>
            <person name="Siu Y."/>
            <person name="Cianfanelli V."/>
            <person name="Maiani E."/>
            <person name="Nazio F."/>
            <person name="Cecconi F."/>
            <person name="Boccalatte F."/>
            <person name="Fenyoe D."/>
            <person name="Jones D.R."/>
            <person name="Busino L."/>
            <person name="Pagano M."/>
        </authorList>
    </citation>
    <scope>UBIQUITINATION</scope>
</reference>